<sequence>MSQKTVHDQDNALLLETGNTKVAPPPRYQVLLLNDDYTPMDFVIVVLQQFFAMDLKKATQVMLHVHTRGCGVCGFYTREVAESKVAQVNEFSRIHQHPLLCTMKQA</sequence>
<organism>
    <name type="scientific">Xylella fastidiosa (strain 9a5c)</name>
    <dbReference type="NCBI Taxonomy" id="160492"/>
    <lineage>
        <taxon>Bacteria</taxon>
        <taxon>Pseudomonadati</taxon>
        <taxon>Pseudomonadota</taxon>
        <taxon>Gammaproteobacteria</taxon>
        <taxon>Lysobacterales</taxon>
        <taxon>Lysobacteraceae</taxon>
        <taxon>Xylella</taxon>
    </lineage>
</organism>
<accession>Q9PDD7</accession>
<reference key="1">
    <citation type="journal article" date="2000" name="Nature">
        <title>The genome sequence of the plant pathogen Xylella fastidiosa.</title>
        <authorList>
            <person name="Simpson A.J.G."/>
            <person name="Reinach F.C."/>
            <person name="Arruda P."/>
            <person name="Abreu F.A."/>
            <person name="Acencio M."/>
            <person name="Alvarenga R."/>
            <person name="Alves L.M.C."/>
            <person name="Araya J.E."/>
            <person name="Baia G.S."/>
            <person name="Baptista C.S."/>
            <person name="Barros M.H."/>
            <person name="Bonaccorsi E.D."/>
            <person name="Bordin S."/>
            <person name="Bove J.M."/>
            <person name="Briones M.R.S."/>
            <person name="Bueno M.R.P."/>
            <person name="Camargo A.A."/>
            <person name="Camargo L.E.A."/>
            <person name="Carraro D.M."/>
            <person name="Carrer H."/>
            <person name="Colauto N.B."/>
            <person name="Colombo C."/>
            <person name="Costa F.F."/>
            <person name="Costa M.C.R."/>
            <person name="Costa-Neto C.M."/>
            <person name="Coutinho L.L."/>
            <person name="Cristofani M."/>
            <person name="Dias-Neto E."/>
            <person name="Docena C."/>
            <person name="El-Dorry H."/>
            <person name="Facincani A.P."/>
            <person name="Ferreira A.J.S."/>
            <person name="Ferreira V.C.A."/>
            <person name="Ferro J.A."/>
            <person name="Fraga J.S."/>
            <person name="Franca S.C."/>
            <person name="Franco M.C."/>
            <person name="Frohme M."/>
            <person name="Furlan L.R."/>
            <person name="Garnier M."/>
            <person name="Goldman G.H."/>
            <person name="Goldman M.H.S."/>
            <person name="Gomes S.L."/>
            <person name="Gruber A."/>
            <person name="Ho P.L."/>
            <person name="Hoheisel J.D."/>
            <person name="Junqueira M.L."/>
            <person name="Kemper E.L."/>
            <person name="Kitajima J.P."/>
            <person name="Krieger J.E."/>
            <person name="Kuramae E.E."/>
            <person name="Laigret F."/>
            <person name="Lambais M.R."/>
            <person name="Leite L.C.C."/>
            <person name="Lemos E.G.M."/>
            <person name="Lemos M.V.F."/>
            <person name="Lopes S.A."/>
            <person name="Lopes C.R."/>
            <person name="Machado J.A."/>
            <person name="Machado M.A."/>
            <person name="Madeira A.M.B.N."/>
            <person name="Madeira H.M.F."/>
            <person name="Marino C.L."/>
            <person name="Marques M.V."/>
            <person name="Martins E.A.L."/>
            <person name="Martins E.M.F."/>
            <person name="Matsukuma A.Y."/>
            <person name="Menck C.F.M."/>
            <person name="Miracca E.C."/>
            <person name="Miyaki C.Y."/>
            <person name="Monteiro-Vitorello C.B."/>
            <person name="Moon D.H."/>
            <person name="Nagai M.A."/>
            <person name="Nascimento A.L.T.O."/>
            <person name="Netto L.E.S."/>
            <person name="Nhani A. Jr."/>
            <person name="Nobrega F.G."/>
            <person name="Nunes L.R."/>
            <person name="Oliveira M.A."/>
            <person name="de Oliveira M.C."/>
            <person name="de Oliveira R.C."/>
            <person name="Palmieri D.A."/>
            <person name="Paris A."/>
            <person name="Peixoto B.R."/>
            <person name="Pereira G.A.G."/>
            <person name="Pereira H.A. Jr."/>
            <person name="Pesquero J.B."/>
            <person name="Quaggio R.B."/>
            <person name="Roberto P.G."/>
            <person name="Rodrigues V."/>
            <person name="de Rosa A.J.M."/>
            <person name="de Rosa V.E. Jr."/>
            <person name="de Sa R.G."/>
            <person name="Santelli R.V."/>
            <person name="Sawasaki H.E."/>
            <person name="da Silva A.C.R."/>
            <person name="da Silva A.M."/>
            <person name="da Silva F.R."/>
            <person name="Silva W.A. Jr."/>
            <person name="da Silveira J.F."/>
            <person name="Silvestri M.L.Z."/>
            <person name="Siqueira W.J."/>
            <person name="de Souza A.A."/>
            <person name="de Souza A.P."/>
            <person name="Terenzi M.F."/>
            <person name="Truffi D."/>
            <person name="Tsai S.M."/>
            <person name="Tsuhako M.H."/>
            <person name="Vallada H."/>
            <person name="Van Sluys M.A."/>
            <person name="Verjovski-Almeida S."/>
            <person name="Vettore A.L."/>
            <person name="Zago M.A."/>
            <person name="Zatz M."/>
            <person name="Meidanis J."/>
            <person name="Setubal J.C."/>
        </authorList>
    </citation>
    <scope>NUCLEOTIDE SEQUENCE [LARGE SCALE GENOMIC DNA]</scope>
    <source>
        <strain>9a5c</strain>
    </source>
</reference>
<gene>
    <name evidence="1" type="primary">clpS</name>
    <name type="ordered locus">XF_1442</name>
</gene>
<protein>
    <recommendedName>
        <fullName evidence="1">ATP-dependent Clp protease adapter protein ClpS</fullName>
    </recommendedName>
</protein>
<comment type="function">
    <text evidence="1">Involved in the modulation of the specificity of the ClpAP-mediated ATP-dependent protein degradation.</text>
</comment>
<comment type="subunit">
    <text evidence="1">Binds to the N-terminal domain of the chaperone ClpA.</text>
</comment>
<comment type="similarity">
    <text evidence="1">Belongs to the ClpS family.</text>
</comment>
<feature type="chain" id="PRO_0000215765" description="ATP-dependent Clp protease adapter protein ClpS">
    <location>
        <begin position="1"/>
        <end position="106"/>
    </location>
</feature>
<feature type="region of interest" description="Disordered" evidence="2">
    <location>
        <begin position="1"/>
        <end position="22"/>
    </location>
</feature>
<feature type="compositionally biased region" description="Basic and acidic residues" evidence="2">
    <location>
        <begin position="1"/>
        <end position="10"/>
    </location>
</feature>
<evidence type="ECO:0000255" key="1">
    <source>
        <dbReference type="HAMAP-Rule" id="MF_00302"/>
    </source>
</evidence>
<evidence type="ECO:0000256" key="2">
    <source>
        <dbReference type="SAM" id="MobiDB-lite"/>
    </source>
</evidence>
<proteinExistence type="inferred from homology"/>
<dbReference type="EMBL" id="AE003849">
    <property type="protein sequence ID" value="AAF84251.1"/>
    <property type="molecule type" value="Genomic_DNA"/>
</dbReference>
<dbReference type="PIR" id="H82680">
    <property type="entry name" value="H82680"/>
</dbReference>
<dbReference type="RefSeq" id="WP_010893943.1">
    <property type="nucleotide sequence ID" value="NC_002488.3"/>
</dbReference>
<dbReference type="SMR" id="Q9PDD7"/>
<dbReference type="STRING" id="160492.XF_1442"/>
<dbReference type="KEGG" id="xfa:XF_1442"/>
<dbReference type="eggNOG" id="COG2127">
    <property type="taxonomic scope" value="Bacteria"/>
</dbReference>
<dbReference type="HOGENOM" id="CLU_134358_2_1_6"/>
<dbReference type="Proteomes" id="UP000000812">
    <property type="component" value="Chromosome"/>
</dbReference>
<dbReference type="GO" id="GO:0030163">
    <property type="term" value="P:protein catabolic process"/>
    <property type="evidence" value="ECO:0007669"/>
    <property type="project" value="InterPro"/>
</dbReference>
<dbReference type="GO" id="GO:0006508">
    <property type="term" value="P:proteolysis"/>
    <property type="evidence" value="ECO:0007669"/>
    <property type="project" value="UniProtKB-UniRule"/>
</dbReference>
<dbReference type="FunFam" id="3.30.1390.10:FF:000002">
    <property type="entry name" value="ATP-dependent Clp protease adapter protein ClpS"/>
    <property type="match status" value="1"/>
</dbReference>
<dbReference type="Gene3D" id="3.30.1390.10">
    <property type="match status" value="1"/>
</dbReference>
<dbReference type="HAMAP" id="MF_00302">
    <property type="entry name" value="ClpS"/>
    <property type="match status" value="1"/>
</dbReference>
<dbReference type="InterPro" id="IPR022935">
    <property type="entry name" value="ClpS"/>
</dbReference>
<dbReference type="InterPro" id="IPR003769">
    <property type="entry name" value="ClpS_core"/>
</dbReference>
<dbReference type="InterPro" id="IPR014719">
    <property type="entry name" value="Ribosomal_bL12_C/ClpS-like"/>
</dbReference>
<dbReference type="NCBIfam" id="NF000672">
    <property type="entry name" value="PRK00033.1-5"/>
    <property type="match status" value="1"/>
</dbReference>
<dbReference type="PANTHER" id="PTHR33473:SF19">
    <property type="entry name" value="ATP-DEPENDENT CLP PROTEASE ADAPTER PROTEIN CLPS"/>
    <property type="match status" value="1"/>
</dbReference>
<dbReference type="PANTHER" id="PTHR33473">
    <property type="entry name" value="ATP-DEPENDENT CLP PROTEASE ADAPTER PROTEIN CLPS1, CHLOROPLASTIC"/>
    <property type="match status" value="1"/>
</dbReference>
<dbReference type="Pfam" id="PF02617">
    <property type="entry name" value="ClpS"/>
    <property type="match status" value="1"/>
</dbReference>
<dbReference type="SUPFAM" id="SSF54736">
    <property type="entry name" value="ClpS-like"/>
    <property type="match status" value="1"/>
</dbReference>
<name>CLPS_XYLFA</name>